<sequence>MGFENSPHPPTLFLLRSILRYKPHQHRTNHNPMIVQCRSLTLPGLCCIPPYTFQQRVSTCKKPILRQIYHISSHQDRTKQSGRGRILARGKYVVSHPSDQAH</sequence>
<proteinExistence type="predicted"/>
<name>VP21_BPAPS</name>
<evidence type="ECO:0000256" key="1">
    <source>
        <dbReference type="SAM" id="MobiDB-lite"/>
    </source>
</evidence>
<dbReference type="EMBL" id="AF157835">
    <property type="protein sequence ID" value="AAF03964.1"/>
    <property type="molecule type" value="Genomic_DNA"/>
</dbReference>
<dbReference type="RefSeq" id="NP_050982.1">
    <property type="nucleotide sequence ID" value="NC_000935.1"/>
</dbReference>
<dbReference type="KEGG" id="vg:1262315"/>
<dbReference type="Proteomes" id="UP000000853">
    <property type="component" value="Genome"/>
</dbReference>
<reference key="1">
    <citation type="journal article" date="1999" name="Virology">
        <title>Isolation and characterization of APSE-1, a bacteriophage infecting the secondary endosymbiont of acyrthosiphon pisum.</title>
        <authorList>
            <person name="van der Wilk F."/>
            <person name="Dullemans A.M."/>
            <person name="Verbeek M."/>
            <person name="van den Heuvel J.F.J.M."/>
        </authorList>
    </citation>
    <scope>NUCLEOTIDE SEQUENCE [LARGE SCALE GENOMIC DNA]</scope>
</reference>
<protein>
    <recommendedName>
        <fullName>Putative protein p21</fullName>
    </recommendedName>
</protein>
<keyword id="KW-1185">Reference proteome</keyword>
<organismHost>
    <name type="scientific">Escherichia coli</name>
    <dbReference type="NCBI Taxonomy" id="562"/>
</organismHost>
<accession>Q9T1S7</accession>
<organism>
    <name type="scientific">Acyrthosiphon pisum secondary endosymbiont phage 1</name>
    <name type="common">Bacteriophage APSE-1</name>
    <dbReference type="NCBI Taxonomy" id="2682836"/>
    <lineage>
        <taxon>Viruses</taxon>
        <taxon>Duplodnaviria</taxon>
        <taxon>Heunggongvirae</taxon>
        <taxon>Uroviricota</taxon>
        <taxon>Caudoviricetes</taxon>
        <taxon>Sendosyvirus</taxon>
        <taxon>Sendosyvirus APSE1</taxon>
    </lineage>
</organism>
<gene>
    <name type="primary">21</name>
</gene>
<feature type="chain" id="PRO_0000077862" description="Putative protein p21">
    <location>
        <begin position="1"/>
        <end position="102"/>
    </location>
</feature>
<feature type="region of interest" description="Disordered" evidence="1">
    <location>
        <begin position="73"/>
        <end position="102"/>
    </location>
</feature>